<organism>
    <name type="scientific">Acinetobacter baumannii (strain AB307-0294)</name>
    <dbReference type="NCBI Taxonomy" id="557600"/>
    <lineage>
        <taxon>Bacteria</taxon>
        <taxon>Pseudomonadati</taxon>
        <taxon>Pseudomonadota</taxon>
        <taxon>Gammaproteobacteria</taxon>
        <taxon>Moraxellales</taxon>
        <taxon>Moraxellaceae</taxon>
        <taxon>Acinetobacter</taxon>
        <taxon>Acinetobacter calcoaceticus/baumannii complex</taxon>
    </lineage>
</organism>
<name>UREG_ACIB3</name>
<reference key="1">
    <citation type="journal article" date="2008" name="J. Bacteriol.">
        <title>Comparative genome sequence analysis of multidrug-resistant Acinetobacter baumannii.</title>
        <authorList>
            <person name="Adams M.D."/>
            <person name="Goglin K."/>
            <person name="Molyneaux N."/>
            <person name="Hujer K.M."/>
            <person name="Lavender H."/>
            <person name="Jamison J.J."/>
            <person name="MacDonald I.J."/>
            <person name="Martin K.M."/>
            <person name="Russo T."/>
            <person name="Campagnari A.A."/>
            <person name="Hujer A.M."/>
            <person name="Bonomo R.A."/>
            <person name="Gill S.R."/>
        </authorList>
    </citation>
    <scope>NUCLEOTIDE SEQUENCE [LARGE SCALE GENOMIC DNA]</scope>
    <source>
        <strain>AB307-0294</strain>
    </source>
</reference>
<protein>
    <recommendedName>
        <fullName evidence="1">Urease accessory protein UreG</fullName>
    </recommendedName>
</protein>
<feature type="chain" id="PRO_1000145157" description="Urease accessory protein UreG">
    <location>
        <begin position="1"/>
        <end position="204"/>
    </location>
</feature>
<feature type="binding site" evidence="1">
    <location>
        <begin position="13"/>
        <end position="20"/>
    </location>
    <ligand>
        <name>GTP</name>
        <dbReference type="ChEBI" id="CHEBI:37565"/>
    </ligand>
</feature>
<keyword id="KW-0143">Chaperone</keyword>
<keyword id="KW-0963">Cytoplasm</keyword>
<keyword id="KW-0342">GTP-binding</keyword>
<keyword id="KW-0996">Nickel insertion</keyword>
<keyword id="KW-0547">Nucleotide-binding</keyword>
<sequence length="204" mass="22106">MTERSPLRVGIGGPVGSGKTALTLNLCRALRDKYNMAVVTNDIYTKEDSNFLTRNEAMSPDRIVGVETGGCPHTAIREDASINLAAIDDLCEKFDGLELIIIESGGDNLAATFSPELSDLTLYVIDVAGGEKIPRKGGPGITKSDLLIINKTDLAPMVGANLDVMDQDAKRMRGEKPFLFSNMKTQDGLEEIIQFIEKQGLFKA</sequence>
<comment type="function">
    <text evidence="1">Facilitates the functional incorporation of the urease nickel metallocenter. This process requires GTP hydrolysis, probably effectuated by UreG.</text>
</comment>
<comment type="subunit">
    <text evidence="1">Homodimer. UreD, UreF and UreG form a complex that acts as a GTP-hydrolysis-dependent molecular chaperone, activating the urease apoprotein by helping to assemble the nickel containing metallocenter of UreC. The UreE protein probably delivers the nickel.</text>
</comment>
<comment type="subcellular location">
    <subcellularLocation>
        <location evidence="1">Cytoplasm</location>
    </subcellularLocation>
</comment>
<comment type="similarity">
    <text evidence="1">Belongs to the SIMIBI class G3E GTPase family. UreG subfamily.</text>
</comment>
<proteinExistence type="inferred from homology"/>
<evidence type="ECO:0000255" key="1">
    <source>
        <dbReference type="HAMAP-Rule" id="MF_01389"/>
    </source>
</evidence>
<dbReference type="EMBL" id="CP001172">
    <property type="protein sequence ID" value="ACJ57695.1"/>
    <property type="molecule type" value="Genomic_DNA"/>
</dbReference>
<dbReference type="RefSeq" id="WP_000140200.1">
    <property type="nucleotide sequence ID" value="NZ_CP001172.1"/>
</dbReference>
<dbReference type="SMR" id="B7GXU0"/>
<dbReference type="GeneID" id="92892980"/>
<dbReference type="HOGENOM" id="CLU_072144_1_0_6"/>
<dbReference type="Proteomes" id="UP000006924">
    <property type="component" value="Chromosome"/>
</dbReference>
<dbReference type="GO" id="GO:0005737">
    <property type="term" value="C:cytoplasm"/>
    <property type="evidence" value="ECO:0007669"/>
    <property type="project" value="UniProtKB-SubCell"/>
</dbReference>
<dbReference type="GO" id="GO:0005525">
    <property type="term" value="F:GTP binding"/>
    <property type="evidence" value="ECO:0007669"/>
    <property type="project" value="UniProtKB-KW"/>
</dbReference>
<dbReference type="GO" id="GO:0003924">
    <property type="term" value="F:GTPase activity"/>
    <property type="evidence" value="ECO:0007669"/>
    <property type="project" value="InterPro"/>
</dbReference>
<dbReference type="GO" id="GO:0016151">
    <property type="term" value="F:nickel cation binding"/>
    <property type="evidence" value="ECO:0007669"/>
    <property type="project" value="UniProtKB-UniRule"/>
</dbReference>
<dbReference type="GO" id="GO:0043419">
    <property type="term" value="P:urea catabolic process"/>
    <property type="evidence" value="ECO:0007669"/>
    <property type="project" value="InterPro"/>
</dbReference>
<dbReference type="CDD" id="cd05540">
    <property type="entry name" value="UreG"/>
    <property type="match status" value="1"/>
</dbReference>
<dbReference type="FunFam" id="3.40.50.300:FF:000208">
    <property type="entry name" value="Urease accessory protein UreG"/>
    <property type="match status" value="1"/>
</dbReference>
<dbReference type="Gene3D" id="3.40.50.300">
    <property type="entry name" value="P-loop containing nucleotide triphosphate hydrolases"/>
    <property type="match status" value="1"/>
</dbReference>
<dbReference type="HAMAP" id="MF_01389">
    <property type="entry name" value="UreG"/>
    <property type="match status" value="1"/>
</dbReference>
<dbReference type="InterPro" id="IPR003495">
    <property type="entry name" value="CobW/HypB/UreG_nucleotide-bd"/>
</dbReference>
<dbReference type="InterPro" id="IPR027417">
    <property type="entry name" value="P-loop_NTPase"/>
</dbReference>
<dbReference type="InterPro" id="IPR004400">
    <property type="entry name" value="UreG"/>
</dbReference>
<dbReference type="NCBIfam" id="TIGR00101">
    <property type="entry name" value="ureG"/>
    <property type="match status" value="1"/>
</dbReference>
<dbReference type="PANTHER" id="PTHR31715">
    <property type="entry name" value="UREASE ACCESSORY PROTEIN G"/>
    <property type="match status" value="1"/>
</dbReference>
<dbReference type="PANTHER" id="PTHR31715:SF0">
    <property type="entry name" value="UREASE ACCESSORY PROTEIN G"/>
    <property type="match status" value="1"/>
</dbReference>
<dbReference type="Pfam" id="PF02492">
    <property type="entry name" value="cobW"/>
    <property type="match status" value="1"/>
</dbReference>
<dbReference type="PIRSF" id="PIRSF005624">
    <property type="entry name" value="Ni-bind_GTPase"/>
    <property type="match status" value="1"/>
</dbReference>
<dbReference type="SUPFAM" id="SSF52540">
    <property type="entry name" value="P-loop containing nucleoside triphosphate hydrolases"/>
    <property type="match status" value="1"/>
</dbReference>
<gene>
    <name evidence="1" type="primary">ureG</name>
    <name type="ordered locus">ABBFA_002592</name>
</gene>
<accession>B7GXU0</accession>